<comment type="function">
    <text evidence="1">Plays a critical role in the incorporation of lipoproteins in the outer membrane after they are released by the LolA protein.</text>
</comment>
<comment type="subunit">
    <text evidence="1">Monomer.</text>
</comment>
<comment type="subcellular location">
    <subcellularLocation>
        <location evidence="1">Cell outer membrane</location>
        <topology evidence="1">Lipid-anchor</topology>
    </subcellularLocation>
</comment>
<comment type="similarity">
    <text evidence="1">Belongs to the LolB family.</text>
</comment>
<gene>
    <name evidence="1" type="primary">lolB</name>
    <name type="ordered locus">SEN1261</name>
</gene>
<feature type="signal peptide" evidence="1">
    <location>
        <begin position="1"/>
        <end position="21"/>
    </location>
</feature>
<feature type="chain" id="PRO_1000100504" description="Outer-membrane lipoprotein LolB">
    <location>
        <begin position="22"/>
        <end position="207"/>
    </location>
</feature>
<feature type="lipid moiety-binding region" description="N-palmitoyl cysteine" evidence="1">
    <location>
        <position position="22"/>
    </location>
</feature>
<feature type="lipid moiety-binding region" description="S-diacylglycerol cysteine" evidence="1">
    <location>
        <position position="22"/>
    </location>
</feature>
<reference key="1">
    <citation type="journal article" date="2008" name="Genome Res.">
        <title>Comparative genome analysis of Salmonella enteritidis PT4 and Salmonella gallinarum 287/91 provides insights into evolutionary and host adaptation pathways.</title>
        <authorList>
            <person name="Thomson N.R."/>
            <person name="Clayton D.J."/>
            <person name="Windhorst D."/>
            <person name="Vernikos G."/>
            <person name="Davidson S."/>
            <person name="Churcher C."/>
            <person name="Quail M.A."/>
            <person name="Stevens M."/>
            <person name="Jones M.A."/>
            <person name="Watson M."/>
            <person name="Barron A."/>
            <person name="Layton A."/>
            <person name="Pickard D."/>
            <person name="Kingsley R.A."/>
            <person name="Bignell A."/>
            <person name="Clark L."/>
            <person name="Harris B."/>
            <person name="Ormond D."/>
            <person name="Abdellah Z."/>
            <person name="Brooks K."/>
            <person name="Cherevach I."/>
            <person name="Chillingworth T."/>
            <person name="Woodward J."/>
            <person name="Norberczak H."/>
            <person name="Lord A."/>
            <person name="Arrowsmith C."/>
            <person name="Jagels K."/>
            <person name="Moule S."/>
            <person name="Mungall K."/>
            <person name="Saunders M."/>
            <person name="Whitehead S."/>
            <person name="Chabalgoity J.A."/>
            <person name="Maskell D."/>
            <person name="Humphreys T."/>
            <person name="Roberts M."/>
            <person name="Barrow P.A."/>
            <person name="Dougan G."/>
            <person name="Parkhill J."/>
        </authorList>
    </citation>
    <scope>NUCLEOTIDE SEQUENCE [LARGE SCALE GENOMIC DNA]</scope>
    <source>
        <strain>P125109</strain>
    </source>
</reference>
<dbReference type="EMBL" id="AM933172">
    <property type="protein sequence ID" value="CAR32839.1"/>
    <property type="molecule type" value="Genomic_DNA"/>
</dbReference>
<dbReference type="RefSeq" id="WP_000174484.1">
    <property type="nucleotide sequence ID" value="NC_011294.1"/>
</dbReference>
<dbReference type="SMR" id="B5R3J7"/>
<dbReference type="KEGG" id="set:SEN1261"/>
<dbReference type="HOGENOM" id="CLU_092816_1_1_6"/>
<dbReference type="Proteomes" id="UP000000613">
    <property type="component" value="Chromosome"/>
</dbReference>
<dbReference type="GO" id="GO:0009279">
    <property type="term" value="C:cell outer membrane"/>
    <property type="evidence" value="ECO:0007669"/>
    <property type="project" value="UniProtKB-SubCell"/>
</dbReference>
<dbReference type="GO" id="GO:0044874">
    <property type="term" value="P:lipoprotein localization to outer membrane"/>
    <property type="evidence" value="ECO:0007669"/>
    <property type="project" value="UniProtKB-UniRule"/>
</dbReference>
<dbReference type="GO" id="GO:0015031">
    <property type="term" value="P:protein transport"/>
    <property type="evidence" value="ECO:0007669"/>
    <property type="project" value="UniProtKB-KW"/>
</dbReference>
<dbReference type="CDD" id="cd16326">
    <property type="entry name" value="LolB"/>
    <property type="match status" value="1"/>
</dbReference>
<dbReference type="FunFam" id="2.50.20.10:FF:000002">
    <property type="entry name" value="Outer-membrane lipoprotein LolB"/>
    <property type="match status" value="1"/>
</dbReference>
<dbReference type="Gene3D" id="2.50.20.10">
    <property type="entry name" value="Lipoprotein localisation LolA/LolB/LppX"/>
    <property type="match status" value="1"/>
</dbReference>
<dbReference type="HAMAP" id="MF_00233">
    <property type="entry name" value="LolB"/>
    <property type="match status" value="1"/>
</dbReference>
<dbReference type="InterPro" id="IPR029046">
    <property type="entry name" value="LolA/LolB/LppX"/>
</dbReference>
<dbReference type="InterPro" id="IPR004565">
    <property type="entry name" value="OM_lipoprot_LolB"/>
</dbReference>
<dbReference type="NCBIfam" id="TIGR00548">
    <property type="entry name" value="lolB"/>
    <property type="match status" value="1"/>
</dbReference>
<dbReference type="Pfam" id="PF03550">
    <property type="entry name" value="LolB"/>
    <property type="match status" value="1"/>
</dbReference>
<dbReference type="SUPFAM" id="SSF89392">
    <property type="entry name" value="Prokaryotic lipoproteins and lipoprotein localization factors"/>
    <property type="match status" value="1"/>
</dbReference>
<dbReference type="PROSITE" id="PS51257">
    <property type="entry name" value="PROKAR_LIPOPROTEIN"/>
    <property type="match status" value="1"/>
</dbReference>
<name>LOLB_SALEP</name>
<keyword id="KW-0998">Cell outer membrane</keyword>
<keyword id="KW-0143">Chaperone</keyword>
<keyword id="KW-0449">Lipoprotein</keyword>
<keyword id="KW-0472">Membrane</keyword>
<keyword id="KW-0564">Palmitate</keyword>
<keyword id="KW-0653">Protein transport</keyword>
<keyword id="KW-0732">Signal</keyword>
<keyword id="KW-0813">Transport</keyword>
<protein>
    <recommendedName>
        <fullName evidence="1">Outer-membrane lipoprotein LolB</fullName>
    </recommendedName>
</protein>
<proteinExistence type="inferred from homology"/>
<evidence type="ECO:0000255" key="1">
    <source>
        <dbReference type="HAMAP-Rule" id="MF_00233"/>
    </source>
</evidence>
<sequence>MTLPDFRLIRLLPLASLVLTACTLPGHKGPGKSPDSPQWRQHQQEVRHLNQYQTRGAFAYISDDQKVYARFFWQQTGQDRYRLLLTNPLGSTELELNAQPGNVQLVDNKGQRYTADDAEEMIGKLTGMPIPLNSLRQWILGLPGDATDYKLDDQYRLSEVNYRQDGKNWKVVYGGYDSKTQPAMPANMELSDGSQRIKLKMDNWIVK</sequence>
<accession>B5R3J7</accession>
<organism>
    <name type="scientific">Salmonella enteritidis PT4 (strain P125109)</name>
    <dbReference type="NCBI Taxonomy" id="550537"/>
    <lineage>
        <taxon>Bacteria</taxon>
        <taxon>Pseudomonadati</taxon>
        <taxon>Pseudomonadota</taxon>
        <taxon>Gammaproteobacteria</taxon>
        <taxon>Enterobacterales</taxon>
        <taxon>Enterobacteriaceae</taxon>
        <taxon>Salmonella</taxon>
    </lineage>
</organism>